<accession>Q9RTA9</accession>
<dbReference type="EC" id="6.3.5.7" evidence="1"/>
<dbReference type="EMBL" id="AE000513">
    <property type="protein sequence ID" value="AAF11407.1"/>
    <property type="molecule type" value="Genomic_DNA"/>
</dbReference>
<dbReference type="PIR" id="D75346">
    <property type="entry name" value="D75346"/>
</dbReference>
<dbReference type="RefSeq" id="NP_295579.1">
    <property type="nucleotide sequence ID" value="NC_001263.1"/>
</dbReference>
<dbReference type="RefSeq" id="WP_010888491.1">
    <property type="nucleotide sequence ID" value="NC_001263.1"/>
</dbReference>
<dbReference type="SMR" id="Q9RTA9"/>
<dbReference type="FunCoup" id="Q9RTA9">
    <property type="interactions" value="452"/>
</dbReference>
<dbReference type="STRING" id="243230.DR_1856"/>
<dbReference type="PaxDb" id="243230-DR_1856"/>
<dbReference type="EnsemblBacteria" id="AAF11407">
    <property type="protein sequence ID" value="AAF11407"/>
    <property type="gene ID" value="DR_1856"/>
</dbReference>
<dbReference type="GeneID" id="69518096"/>
<dbReference type="KEGG" id="dra:DR_1856"/>
<dbReference type="PATRIC" id="fig|243230.17.peg.2068"/>
<dbReference type="eggNOG" id="COG0154">
    <property type="taxonomic scope" value="Bacteria"/>
</dbReference>
<dbReference type="HOGENOM" id="CLU_009600_0_3_0"/>
<dbReference type="InParanoid" id="Q9RTA9"/>
<dbReference type="OrthoDB" id="9811471at2"/>
<dbReference type="BioCyc" id="MetaCyc:MONOMER-14049"/>
<dbReference type="Proteomes" id="UP000002524">
    <property type="component" value="Chromosome 1"/>
</dbReference>
<dbReference type="GO" id="GO:0030956">
    <property type="term" value="C:glutamyl-tRNA(Gln) amidotransferase complex"/>
    <property type="evidence" value="ECO:0007669"/>
    <property type="project" value="InterPro"/>
</dbReference>
<dbReference type="GO" id="GO:0005524">
    <property type="term" value="F:ATP binding"/>
    <property type="evidence" value="ECO:0007669"/>
    <property type="project" value="UniProtKB-KW"/>
</dbReference>
<dbReference type="GO" id="GO:0050567">
    <property type="term" value="F:glutaminyl-tRNA synthase (glutamine-hydrolyzing) activity"/>
    <property type="evidence" value="ECO:0007669"/>
    <property type="project" value="UniProtKB-UniRule"/>
</dbReference>
<dbReference type="GO" id="GO:0006412">
    <property type="term" value="P:translation"/>
    <property type="evidence" value="ECO:0007669"/>
    <property type="project" value="UniProtKB-UniRule"/>
</dbReference>
<dbReference type="Gene3D" id="3.90.1300.10">
    <property type="entry name" value="Amidase signature (AS) domain"/>
    <property type="match status" value="1"/>
</dbReference>
<dbReference type="HAMAP" id="MF_00120">
    <property type="entry name" value="GatA"/>
    <property type="match status" value="1"/>
</dbReference>
<dbReference type="InterPro" id="IPR000120">
    <property type="entry name" value="Amidase"/>
</dbReference>
<dbReference type="InterPro" id="IPR020556">
    <property type="entry name" value="Amidase_CS"/>
</dbReference>
<dbReference type="InterPro" id="IPR023631">
    <property type="entry name" value="Amidase_dom"/>
</dbReference>
<dbReference type="InterPro" id="IPR036928">
    <property type="entry name" value="AS_sf"/>
</dbReference>
<dbReference type="InterPro" id="IPR004412">
    <property type="entry name" value="GatA"/>
</dbReference>
<dbReference type="NCBIfam" id="TIGR00132">
    <property type="entry name" value="gatA"/>
    <property type="match status" value="1"/>
</dbReference>
<dbReference type="PANTHER" id="PTHR11895:SF151">
    <property type="entry name" value="GLUTAMYL-TRNA(GLN) AMIDOTRANSFERASE SUBUNIT A"/>
    <property type="match status" value="1"/>
</dbReference>
<dbReference type="PANTHER" id="PTHR11895">
    <property type="entry name" value="TRANSAMIDASE"/>
    <property type="match status" value="1"/>
</dbReference>
<dbReference type="Pfam" id="PF01425">
    <property type="entry name" value="Amidase"/>
    <property type="match status" value="1"/>
</dbReference>
<dbReference type="SUPFAM" id="SSF75304">
    <property type="entry name" value="Amidase signature (AS) enzymes"/>
    <property type="match status" value="1"/>
</dbReference>
<dbReference type="PROSITE" id="PS00571">
    <property type="entry name" value="AMIDASES"/>
    <property type="match status" value="1"/>
</dbReference>
<name>GATA_DEIRA</name>
<protein>
    <recommendedName>
        <fullName evidence="1">Glutamyl-tRNA(Gln) amidotransferase subunit A</fullName>
        <shortName evidence="1">Glu-ADT subunit A</shortName>
        <ecNumber evidence="1">6.3.5.7</ecNumber>
    </recommendedName>
</protein>
<evidence type="ECO:0000255" key="1">
    <source>
        <dbReference type="HAMAP-Rule" id="MF_00120"/>
    </source>
</evidence>
<reference key="1">
    <citation type="journal article" date="1999" name="Science">
        <title>Genome sequence of the radioresistant bacterium Deinococcus radiodurans R1.</title>
        <authorList>
            <person name="White O."/>
            <person name="Eisen J.A."/>
            <person name="Heidelberg J.F."/>
            <person name="Hickey E.K."/>
            <person name="Peterson J.D."/>
            <person name="Dodson R.J."/>
            <person name="Haft D.H."/>
            <person name="Gwinn M.L."/>
            <person name="Nelson W.C."/>
            <person name="Richardson D.L."/>
            <person name="Moffat K.S."/>
            <person name="Qin H."/>
            <person name="Jiang L."/>
            <person name="Pamphile W."/>
            <person name="Crosby M."/>
            <person name="Shen M."/>
            <person name="Vamathevan J.J."/>
            <person name="Lam P."/>
            <person name="McDonald L.A."/>
            <person name="Utterback T.R."/>
            <person name="Zalewski C."/>
            <person name="Makarova K.S."/>
            <person name="Aravind L."/>
            <person name="Daly M.J."/>
            <person name="Minton K.W."/>
            <person name="Fleischmann R.D."/>
            <person name="Ketchum K.A."/>
            <person name="Nelson K.E."/>
            <person name="Salzberg S.L."/>
            <person name="Smith H.O."/>
            <person name="Venter J.C."/>
            <person name="Fraser C.M."/>
        </authorList>
    </citation>
    <scope>NUCLEOTIDE SEQUENCE [LARGE SCALE GENOMIC DNA]</scope>
    <source>
        <strain>ATCC 13939 / DSM 20539 / JCM 16871 / CCUG 27074 / LMG 4051 / NBRC 15346 / NCIMB 9279 / VKM B-1422 / R1</strain>
    </source>
</reference>
<comment type="function">
    <text evidence="1">Allows the formation of correctly charged Gln-tRNA(Gln) through the transamidation of misacylated Glu-tRNA(Gln) in organisms which lack glutaminyl-tRNA synthetase. The reaction takes place in the presence of glutamine and ATP through an activated gamma-phospho-Glu-tRNA(Gln).</text>
</comment>
<comment type="catalytic activity">
    <reaction evidence="1">
        <text>L-glutamyl-tRNA(Gln) + L-glutamine + ATP + H2O = L-glutaminyl-tRNA(Gln) + L-glutamate + ADP + phosphate + H(+)</text>
        <dbReference type="Rhea" id="RHEA:17521"/>
        <dbReference type="Rhea" id="RHEA-COMP:9681"/>
        <dbReference type="Rhea" id="RHEA-COMP:9684"/>
        <dbReference type="ChEBI" id="CHEBI:15377"/>
        <dbReference type="ChEBI" id="CHEBI:15378"/>
        <dbReference type="ChEBI" id="CHEBI:29985"/>
        <dbReference type="ChEBI" id="CHEBI:30616"/>
        <dbReference type="ChEBI" id="CHEBI:43474"/>
        <dbReference type="ChEBI" id="CHEBI:58359"/>
        <dbReference type="ChEBI" id="CHEBI:78520"/>
        <dbReference type="ChEBI" id="CHEBI:78521"/>
        <dbReference type="ChEBI" id="CHEBI:456216"/>
        <dbReference type="EC" id="6.3.5.7"/>
    </reaction>
</comment>
<comment type="subunit">
    <text evidence="1">Heterotrimer of A, B and C subunits.</text>
</comment>
<comment type="similarity">
    <text evidence="1">Belongs to the amidase family. GatA subfamily.</text>
</comment>
<gene>
    <name evidence="1" type="primary">gatA</name>
    <name type="ordered locus">DR_1856</name>
</gene>
<sequence>MAAFQTAAQLARAVQSGETTPQQLLHGALARAEAVRGLNALVSLNSHAEEQAAAVQGRMQAGETLPLAGVPIVVKDNINVTGTRTTCGSRMLANYVSPYTATAAQKLQGAGAVIVGKANMDEFAMGSSTESSASGPTLNPWDHERVPGGSSGGSAVAVAAGISPVSLGSDTGGSVRQPAALCGVYGFKPTYGRVSRYGLVAYASSLDQIGPFARSAEDLALLMNVIAGHDPRDATSLDAPARFAVGGADSLRGLRVGVIRESLGGNTPGVEAALGATLDALRGAGAVVGEVSIPELEYAIAAYYLIAMPEASSNLARYDGMVYGERVPGGDVTRSMTLTREQGFGQEVQRRILLGTYALSSGYYDAYYAKAMKVRRLIADEFTTAFGQYDVLVTPTSPFPAFRRGEKASDPLAMYAADVDTVAVNLAGLPALSVPAGFEEVDGKRLPVGVQFIAPALQDERLLALAGALEAVGAVQLEMPQD</sequence>
<proteinExistence type="inferred from homology"/>
<feature type="chain" id="PRO_0000105161" description="Glutamyl-tRNA(Gln) amidotransferase subunit A">
    <location>
        <begin position="1"/>
        <end position="482"/>
    </location>
</feature>
<feature type="active site" description="Charge relay system" evidence="1">
    <location>
        <position position="75"/>
    </location>
</feature>
<feature type="active site" description="Charge relay system" evidence="1">
    <location>
        <position position="150"/>
    </location>
</feature>
<feature type="active site" description="Acyl-ester intermediate" evidence="1">
    <location>
        <position position="174"/>
    </location>
</feature>
<keyword id="KW-0067">ATP-binding</keyword>
<keyword id="KW-0436">Ligase</keyword>
<keyword id="KW-0547">Nucleotide-binding</keyword>
<keyword id="KW-0648">Protein biosynthesis</keyword>
<keyword id="KW-1185">Reference proteome</keyword>
<organism>
    <name type="scientific">Deinococcus radiodurans (strain ATCC 13939 / DSM 20539 / JCM 16871 / CCUG 27074 / LMG 4051 / NBRC 15346 / NCIMB 9279 / VKM B-1422 / R1)</name>
    <dbReference type="NCBI Taxonomy" id="243230"/>
    <lineage>
        <taxon>Bacteria</taxon>
        <taxon>Thermotogati</taxon>
        <taxon>Deinococcota</taxon>
        <taxon>Deinococci</taxon>
        <taxon>Deinococcales</taxon>
        <taxon>Deinococcaceae</taxon>
        <taxon>Deinococcus</taxon>
    </lineage>
</organism>